<reference key="1">
    <citation type="journal article" date="1992" name="Eur. J. Biochem.">
        <title>Structure of the Clostridium thermocellum gene licB and the encoded beta-1,3-1,4-glucanase. A catalytic region homologous to Bacillus lichenases joined to the reiterated domain of clostridial cellulases.</title>
        <authorList>
            <person name="Schimming S."/>
            <person name="Schwarz W.H."/>
            <person name="Staudenbauer W.L."/>
        </authorList>
    </citation>
    <scope>NUCLEOTIDE SEQUENCE [GENOMIC DNA]</scope>
</reference>
<reference key="2">
    <citation type="submission" date="2007-02" db="EMBL/GenBank/DDBJ databases">
        <title>Complete sequence of Clostridium thermocellum ATCC 27405.</title>
        <authorList>
            <consortium name="US DOE Joint Genome Institute"/>
            <person name="Copeland A."/>
            <person name="Lucas S."/>
            <person name="Lapidus A."/>
            <person name="Barry K."/>
            <person name="Detter J.C."/>
            <person name="Glavina del Rio T."/>
            <person name="Hammon N."/>
            <person name="Israni S."/>
            <person name="Dalin E."/>
            <person name="Tice H."/>
            <person name="Pitluck S."/>
            <person name="Chertkov O."/>
            <person name="Brettin T."/>
            <person name="Bruce D."/>
            <person name="Han C."/>
            <person name="Tapia R."/>
            <person name="Gilna P."/>
            <person name="Schmutz J."/>
            <person name="Larimer F."/>
            <person name="Land M."/>
            <person name="Hauser L."/>
            <person name="Kyrpides N."/>
            <person name="Mikhailova N."/>
            <person name="Wu J.H.D."/>
            <person name="Newcomb M."/>
            <person name="Richardson P."/>
        </authorList>
    </citation>
    <scope>NUCLEOTIDE SEQUENCE [LARGE SCALE GENOMIC DNA]</scope>
    <source>
        <strain>ATCC 27405 / DSM 1237 / JCM 9322 / NBRC 103400 / NCIMB 10682 / NRRL B-4536 / VPI 7372</strain>
    </source>
</reference>
<evidence type="ECO:0000250" key="1"/>
<evidence type="ECO:0000255" key="2"/>
<evidence type="ECO:0000255" key="3">
    <source>
        <dbReference type="PROSITE-ProRule" id="PRU01098"/>
    </source>
</evidence>
<evidence type="ECO:0000255" key="4">
    <source>
        <dbReference type="PROSITE-ProRule" id="PRU01102"/>
    </source>
</evidence>
<evidence type="ECO:0000255" key="5">
    <source>
        <dbReference type="PROSITE-ProRule" id="PRU10064"/>
    </source>
</evidence>
<evidence type="ECO:0000305" key="6"/>
<evidence type="ECO:0007829" key="7">
    <source>
        <dbReference type="PDB" id="3WVJ"/>
    </source>
</evidence>
<proteinExistence type="evidence at protein level"/>
<name>GUB_ACET2</name>
<gene>
    <name type="primary">licB</name>
    <name type="synonym">lam1</name>
    <name type="ordered locus">Cthe_0211</name>
</gene>
<dbReference type="EC" id="3.2.1.73"/>
<dbReference type="EMBL" id="X63355">
    <property type="protein sequence ID" value="CAA44959.1"/>
    <property type="molecule type" value="Genomic_DNA"/>
</dbReference>
<dbReference type="EMBL" id="CP000568">
    <property type="protein sequence ID" value="ABN51452.1"/>
    <property type="molecule type" value="Genomic_DNA"/>
</dbReference>
<dbReference type="PIR" id="S23498">
    <property type="entry name" value="S23498"/>
</dbReference>
<dbReference type="PDB" id="3WVJ">
    <property type="method" value="X-ray"/>
    <property type="resolution" value="1.95 A"/>
    <property type="chains" value="A/B=30-249"/>
</dbReference>
<dbReference type="PDBsum" id="3WVJ"/>
<dbReference type="SMR" id="A3DBX3"/>
<dbReference type="STRING" id="203119.Cthe_0211"/>
<dbReference type="CAZy" id="GH16">
    <property type="family name" value="Glycoside Hydrolase Family 16"/>
</dbReference>
<dbReference type="GeneID" id="35805480"/>
<dbReference type="KEGG" id="cth:Cthe_0211"/>
<dbReference type="eggNOG" id="COG2273">
    <property type="taxonomic scope" value="Bacteria"/>
</dbReference>
<dbReference type="HOGENOM" id="CLU_071026_1_0_9"/>
<dbReference type="OrthoDB" id="9809583at2"/>
<dbReference type="BioCyc" id="MetaCyc:MONOMER-16465"/>
<dbReference type="BRENDA" id="3.2.1.73">
    <property type="organism ID" value="1530"/>
</dbReference>
<dbReference type="EvolutionaryTrace" id="A3DBX3"/>
<dbReference type="Proteomes" id="UP000002145">
    <property type="component" value="Chromosome"/>
</dbReference>
<dbReference type="GO" id="GO:0042972">
    <property type="term" value="F:licheninase activity"/>
    <property type="evidence" value="ECO:0007669"/>
    <property type="project" value="UniProtKB-EC"/>
</dbReference>
<dbReference type="GO" id="GO:0000272">
    <property type="term" value="P:polysaccharide catabolic process"/>
    <property type="evidence" value="ECO:0007669"/>
    <property type="project" value="InterPro"/>
</dbReference>
<dbReference type="CDD" id="cd14256">
    <property type="entry name" value="Dockerin_I"/>
    <property type="match status" value="1"/>
</dbReference>
<dbReference type="CDD" id="cd02175">
    <property type="entry name" value="GH16_lichenase"/>
    <property type="match status" value="1"/>
</dbReference>
<dbReference type="Gene3D" id="2.60.120.200">
    <property type="match status" value="1"/>
</dbReference>
<dbReference type="Gene3D" id="1.10.1330.10">
    <property type="entry name" value="Dockerin domain"/>
    <property type="match status" value="1"/>
</dbReference>
<dbReference type="InterPro" id="IPR044791">
    <property type="entry name" value="Beta-glucanase/XTH"/>
</dbReference>
<dbReference type="InterPro" id="IPR008264">
    <property type="entry name" value="Beta_glucanase"/>
</dbReference>
<dbReference type="InterPro" id="IPR013320">
    <property type="entry name" value="ConA-like_dom_sf"/>
</dbReference>
<dbReference type="InterPro" id="IPR002105">
    <property type="entry name" value="Dockerin_1_rpt"/>
</dbReference>
<dbReference type="InterPro" id="IPR016134">
    <property type="entry name" value="Dockerin_dom"/>
</dbReference>
<dbReference type="InterPro" id="IPR036439">
    <property type="entry name" value="Dockerin_dom_sf"/>
</dbReference>
<dbReference type="InterPro" id="IPR018247">
    <property type="entry name" value="EF_Hand_1_Ca_BS"/>
</dbReference>
<dbReference type="InterPro" id="IPR000757">
    <property type="entry name" value="GH16"/>
</dbReference>
<dbReference type="InterPro" id="IPR008263">
    <property type="entry name" value="GH16_AS"/>
</dbReference>
<dbReference type="NCBIfam" id="NF047856">
    <property type="entry name" value="BGlucanaseBglS"/>
    <property type="match status" value="1"/>
</dbReference>
<dbReference type="PANTHER" id="PTHR31062">
    <property type="entry name" value="XYLOGLUCAN ENDOTRANSGLUCOSYLASE/HYDROLASE PROTEIN 8-RELATED"/>
    <property type="match status" value="1"/>
</dbReference>
<dbReference type="Pfam" id="PF00404">
    <property type="entry name" value="Dockerin_1"/>
    <property type="match status" value="1"/>
</dbReference>
<dbReference type="Pfam" id="PF00722">
    <property type="entry name" value="Glyco_hydro_16"/>
    <property type="match status" value="1"/>
</dbReference>
<dbReference type="PRINTS" id="PR00737">
    <property type="entry name" value="GLHYDRLASE16"/>
</dbReference>
<dbReference type="SUPFAM" id="SSF49899">
    <property type="entry name" value="Concanavalin A-like lectins/glucanases"/>
    <property type="match status" value="1"/>
</dbReference>
<dbReference type="SUPFAM" id="SSF63446">
    <property type="entry name" value="Type I dockerin domain"/>
    <property type="match status" value="1"/>
</dbReference>
<dbReference type="PROSITE" id="PS00448">
    <property type="entry name" value="CLOS_CELLULOSOME_RPT"/>
    <property type="match status" value="2"/>
</dbReference>
<dbReference type="PROSITE" id="PS51766">
    <property type="entry name" value="DOCKERIN"/>
    <property type="match status" value="1"/>
</dbReference>
<dbReference type="PROSITE" id="PS00018">
    <property type="entry name" value="EF_HAND_1"/>
    <property type="match status" value="2"/>
</dbReference>
<dbReference type="PROSITE" id="PS01034">
    <property type="entry name" value="GH16_1"/>
    <property type="match status" value="1"/>
</dbReference>
<dbReference type="PROSITE" id="PS51762">
    <property type="entry name" value="GH16_2"/>
    <property type="match status" value="1"/>
</dbReference>
<accession>A3DBX3</accession>
<accession>P29716</accession>
<accession>P37074</accession>
<keyword id="KW-0002">3D-structure</keyword>
<keyword id="KW-0326">Glycosidase</keyword>
<keyword id="KW-0378">Hydrolase</keyword>
<keyword id="KW-1185">Reference proteome</keyword>
<keyword id="KW-0732">Signal</keyword>
<organism>
    <name type="scientific">Acetivibrio thermocellus (strain ATCC 27405 / DSM 1237 / JCM 9322 / NBRC 103400 / NCIMB 10682 / NRRL B-4536 / VPI 7372)</name>
    <name type="common">Clostridium thermocellum</name>
    <dbReference type="NCBI Taxonomy" id="203119"/>
    <lineage>
        <taxon>Bacteria</taxon>
        <taxon>Bacillati</taxon>
        <taxon>Bacillota</taxon>
        <taxon>Clostridia</taxon>
        <taxon>Eubacteriales</taxon>
        <taxon>Oscillospiraceae</taxon>
        <taxon>Acetivibrio</taxon>
    </lineage>
</organism>
<feature type="signal peptide" evidence="2">
    <location>
        <begin position="1"/>
        <end position="27"/>
    </location>
</feature>
<feature type="chain" id="PRO_0000284719" description="Beta-glucanase">
    <location>
        <begin position="28"/>
        <end position="334"/>
    </location>
</feature>
<feature type="domain" description="GH16" evidence="3">
    <location>
        <begin position="28"/>
        <end position="248"/>
    </location>
</feature>
<feature type="domain" description="Dockerin" evidence="4">
    <location>
        <begin position="267"/>
        <end position="334"/>
    </location>
</feature>
<feature type="active site" description="Nucleophile" evidence="5">
    <location>
        <position position="136"/>
    </location>
</feature>
<feature type="active site" description="Proton donor" evidence="5">
    <location>
        <position position="140"/>
    </location>
</feature>
<feature type="strand" evidence="7">
    <location>
        <begin position="37"/>
        <end position="40"/>
    </location>
</feature>
<feature type="helix" evidence="7">
    <location>
        <begin position="46"/>
        <end position="48"/>
    </location>
</feature>
<feature type="strand" evidence="7">
    <location>
        <begin position="49"/>
        <end position="51"/>
    </location>
</feature>
<feature type="strand" evidence="7">
    <location>
        <begin position="62"/>
        <end position="64"/>
    </location>
</feature>
<feature type="helix" evidence="7">
    <location>
        <begin position="66"/>
        <end position="68"/>
    </location>
</feature>
<feature type="strand" evidence="7">
    <location>
        <begin position="69"/>
        <end position="72"/>
    </location>
</feature>
<feature type="strand" evidence="7">
    <location>
        <begin position="75"/>
        <end position="82"/>
    </location>
</feature>
<feature type="strand" evidence="7">
    <location>
        <begin position="84"/>
        <end position="92"/>
    </location>
</feature>
<feature type="strand" evidence="7">
    <location>
        <begin position="94"/>
        <end position="101"/>
    </location>
</feature>
<feature type="strand" evidence="7">
    <location>
        <begin position="103"/>
        <end position="111"/>
    </location>
</feature>
<feature type="strand" evidence="7">
    <location>
        <begin position="118"/>
        <end position="126"/>
    </location>
</feature>
<feature type="helix" evidence="7">
    <location>
        <begin position="128"/>
        <end position="130"/>
    </location>
</feature>
<feature type="strand" evidence="7">
    <location>
        <begin position="135"/>
        <end position="142"/>
    </location>
</feature>
<feature type="strand" evidence="7">
    <location>
        <begin position="148"/>
        <end position="155"/>
    </location>
</feature>
<feature type="strand" evidence="7">
    <location>
        <begin position="163"/>
        <end position="166"/>
    </location>
</feature>
<feature type="turn" evidence="7">
    <location>
        <begin position="171"/>
        <end position="173"/>
    </location>
</feature>
<feature type="strand" evidence="7">
    <location>
        <begin position="176"/>
        <end position="183"/>
    </location>
</feature>
<feature type="strand" evidence="7">
    <location>
        <begin position="186"/>
        <end position="191"/>
    </location>
</feature>
<feature type="strand" evidence="7">
    <location>
        <begin position="194"/>
        <end position="199"/>
    </location>
</feature>
<feature type="strand" evidence="7">
    <location>
        <begin position="208"/>
        <end position="219"/>
    </location>
</feature>
<feature type="helix" evidence="7">
    <location>
        <begin position="221"/>
        <end position="224"/>
    </location>
</feature>
<feature type="strand" evidence="7">
    <location>
        <begin position="233"/>
        <end position="245"/>
    </location>
</feature>
<sequence>MKNRVISLLMASLLLVLSVIVAPFYKAEAATVVNTPFVAVFSNFDSSQWEKADWANGSVFNCVWKPSQVTFSNGKMILTLDREYGGSYPYKSGEYRTKSFFGYGYYEVRMKAAKNVGIVSSFFTYTGPSDNNPWDEIDIEFLGKDTTKVQFNWYKNGVGGNEYLHNLGFDASQDFHTYGFEWRPDYIDFYVDGKKVYRGTRNIPVTPGKIMMNLWPGIGVDEWLGRYDGRTPLQAEYEYVKYYPNGVPQDNPTPTPTIAPSTPTNPNLPLKGDVNGDGHVNSSDYSLFKRYLLRVIDRFPVGDQSVADVNRDGRIDSTDLTMLKRYLIRAIPSL</sequence>
<protein>
    <recommendedName>
        <fullName>Beta-glucanase</fullName>
        <ecNumber>3.2.1.73</ecNumber>
    </recommendedName>
    <alternativeName>
        <fullName>1,3-1,4-beta-D-glucan 4-glucanohydrolase</fullName>
    </alternativeName>
    <alternativeName>
        <fullName>Endo-beta-1,3-1,4 glucanase</fullName>
    </alternativeName>
    <alternativeName>
        <fullName>Laminarinase</fullName>
    </alternativeName>
    <alternativeName>
        <fullName>Lichenase</fullName>
    </alternativeName>
</protein>
<comment type="catalytic activity">
    <reaction>
        <text>Hydrolysis of (1-&gt;4)-beta-D-glucosidic linkages in beta-D-glucans containing (1-&gt;3)- and (1-&gt;4)-bonds.</text>
        <dbReference type="EC" id="3.2.1.73"/>
    </reaction>
</comment>
<comment type="subunit">
    <text evidence="1">May form part of a multienzyme complex (cellulosome).</text>
</comment>
<comment type="similarity">
    <text evidence="6">Belongs to the glycosyl hydrolase 16 family.</text>
</comment>